<reference key="1">
    <citation type="submission" date="2004-11" db="EMBL/GenBank/DDBJ databases">
        <authorList>
            <consortium name="The German cDNA consortium"/>
        </authorList>
    </citation>
    <scope>NUCLEOTIDE SEQUENCE [LARGE SCALE MRNA]</scope>
    <source>
        <tissue>Kidney</tissue>
    </source>
</reference>
<accession>Q5RD03</accession>
<name>ARMC6_PONAB</name>
<organism>
    <name type="scientific">Pongo abelii</name>
    <name type="common">Sumatran orangutan</name>
    <name type="synonym">Pongo pygmaeus abelii</name>
    <dbReference type="NCBI Taxonomy" id="9601"/>
    <lineage>
        <taxon>Eukaryota</taxon>
        <taxon>Metazoa</taxon>
        <taxon>Chordata</taxon>
        <taxon>Craniata</taxon>
        <taxon>Vertebrata</taxon>
        <taxon>Euteleostomi</taxon>
        <taxon>Mammalia</taxon>
        <taxon>Eutheria</taxon>
        <taxon>Euarchontoglires</taxon>
        <taxon>Primates</taxon>
        <taxon>Haplorrhini</taxon>
        <taxon>Catarrhini</taxon>
        <taxon>Hominidae</taxon>
        <taxon>Pongo</taxon>
    </lineage>
</organism>
<proteinExistence type="evidence at transcript level"/>
<protein>
    <recommendedName>
        <fullName>Armadillo repeat-containing protein 6</fullName>
    </recommendedName>
</protein>
<comment type="PTM">
    <text evidence="1">Methylated at His-263 by METTL9.</text>
</comment>
<comment type="similarity">
    <text evidence="2">Belongs to the ARMC6 family.</text>
</comment>
<comment type="caution">
    <text evidence="2">It is uncertain whether Met-1 or Met-26 is the initiator.</text>
</comment>
<sequence length="501" mass="54205">MSERCRCKYSSGASIDYMPTSTQAKMVSKRIAQETFDAAVRENIEEFAMGPDEAVKEAVEQFESQGVDLSNIVKTAPKVSADGSQEPTHDILQTLSDLQESVASSRPQEVSAYLTRFCDQCKQDKACRFLAAQKGAYPIIFTAWKLATAGDQGLLLQSLNALSVLTDGQPDLLDTQGLQLLVATLTRNADEADLTCSGIRCVRHACLKHEQNRQDLVKAGVLPLLTGAITHHGHHADVVREACCALRVMTFDDDIRVPFGHAHNHAKMIVQENKGLKVLIEATKAFLDNPGILSELCGTLSRLAIRNEFCQEVVDLGGLSILVSLLADCNDHQMGDQSSVQELVKQVLSILRAIAGNDDVKDAIVRAGGTESIVAAMTQHLTSPQVCEQSCAALCFLALRKPDNSRIIVEGGGAVAALQAMKAHPQKAGVQKQACMLIRNLVAHSQAFSKPILDLGAEALIMQARSAHRDCEDVAKAALRDLGCHVELRELWTGQRGNLAP</sequence>
<feature type="chain" id="PRO_0000242662" description="Armadillo repeat-containing protein 6">
    <location>
        <begin position="1"/>
        <end position="501"/>
    </location>
</feature>
<feature type="repeat" description="ARM 1">
    <location>
        <begin position="220"/>
        <end position="264"/>
    </location>
</feature>
<feature type="repeat" description="ARM 2">
    <location>
        <begin position="274"/>
        <end position="318"/>
    </location>
</feature>
<feature type="repeat" description="ARM 3">
    <location>
        <begin position="319"/>
        <end position="369"/>
    </location>
</feature>
<feature type="repeat" description="ARM 4">
    <location>
        <begin position="370"/>
        <end position="412"/>
    </location>
</feature>
<feature type="modified residue" description="Phosphoserine" evidence="1">
    <location>
        <position position="64"/>
    </location>
</feature>
<feature type="modified residue" description="Pros-methylhistidine" evidence="1">
    <location>
        <position position="263"/>
    </location>
</feature>
<evidence type="ECO:0000250" key="1">
    <source>
        <dbReference type="UniProtKB" id="Q6NXE6"/>
    </source>
</evidence>
<evidence type="ECO:0000305" key="2"/>
<dbReference type="EMBL" id="CR858115">
    <property type="protein sequence ID" value="CAH90354.1"/>
    <property type="molecule type" value="mRNA"/>
</dbReference>
<dbReference type="RefSeq" id="NP_001125171.1">
    <property type="nucleotide sequence ID" value="NM_001131699.2"/>
</dbReference>
<dbReference type="SMR" id="Q5RD03"/>
<dbReference type="FunCoup" id="Q5RD03">
    <property type="interactions" value="1941"/>
</dbReference>
<dbReference type="STRING" id="9601.ENSPPYP00000010929"/>
<dbReference type="GeneID" id="100172058"/>
<dbReference type="KEGG" id="pon:100172058"/>
<dbReference type="CTD" id="93436"/>
<dbReference type="eggNOG" id="KOG4199">
    <property type="taxonomic scope" value="Eukaryota"/>
</dbReference>
<dbReference type="InParanoid" id="Q5RD03"/>
<dbReference type="OrthoDB" id="449062at2759"/>
<dbReference type="Proteomes" id="UP000001595">
    <property type="component" value="Unplaced"/>
</dbReference>
<dbReference type="GO" id="GO:0002244">
    <property type="term" value="P:hematopoietic progenitor cell differentiation"/>
    <property type="evidence" value="ECO:0007669"/>
    <property type="project" value="TreeGrafter"/>
</dbReference>
<dbReference type="FunFam" id="1.25.10.10:FF:000172">
    <property type="entry name" value="Armadillo repeat-containing protein 6"/>
    <property type="match status" value="1"/>
</dbReference>
<dbReference type="FunFam" id="1.25.10.10:FF:000228">
    <property type="entry name" value="armadillo repeat-containing protein 6 isoform X1"/>
    <property type="match status" value="1"/>
</dbReference>
<dbReference type="Gene3D" id="1.25.10.10">
    <property type="entry name" value="Leucine-rich Repeat Variant"/>
    <property type="match status" value="2"/>
</dbReference>
<dbReference type="InterPro" id="IPR011989">
    <property type="entry name" value="ARM-like"/>
</dbReference>
<dbReference type="InterPro" id="IPR016024">
    <property type="entry name" value="ARM-type_fold"/>
</dbReference>
<dbReference type="InterPro" id="IPR000225">
    <property type="entry name" value="Armadillo"/>
</dbReference>
<dbReference type="PANTHER" id="PTHR22895">
    <property type="entry name" value="ARMADILLO REPEAT-CONTAINING PROTEIN 6"/>
    <property type="match status" value="1"/>
</dbReference>
<dbReference type="PANTHER" id="PTHR22895:SF0">
    <property type="entry name" value="ARMADILLO REPEAT-CONTAINING PROTEIN 6"/>
    <property type="match status" value="1"/>
</dbReference>
<dbReference type="SMART" id="SM00185">
    <property type="entry name" value="ARM"/>
    <property type="match status" value="6"/>
</dbReference>
<dbReference type="SUPFAM" id="SSF48371">
    <property type="entry name" value="ARM repeat"/>
    <property type="match status" value="1"/>
</dbReference>
<dbReference type="PROSITE" id="PS50176">
    <property type="entry name" value="ARM_REPEAT"/>
    <property type="match status" value="1"/>
</dbReference>
<gene>
    <name type="primary">ARMC6</name>
</gene>
<keyword id="KW-0488">Methylation</keyword>
<keyword id="KW-0597">Phosphoprotein</keyword>
<keyword id="KW-1185">Reference proteome</keyword>
<keyword id="KW-0677">Repeat</keyword>